<evidence type="ECO:0000250" key="1"/>
<evidence type="ECO:0000255" key="2"/>
<evidence type="ECO:0000305" key="3"/>
<organism>
    <name type="scientific">Saccharomyces cerevisiae (strain Lalvin EC1118 / Prise de mousse)</name>
    <name type="common">Baker's yeast</name>
    <dbReference type="NCBI Taxonomy" id="643680"/>
    <lineage>
        <taxon>Eukaryota</taxon>
        <taxon>Fungi</taxon>
        <taxon>Dikarya</taxon>
        <taxon>Ascomycota</taxon>
        <taxon>Saccharomycotina</taxon>
        <taxon>Saccharomycetes</taxon>
        <taxon>Saccharomycetales</taxon>
        <taxon>Saccharomycetaceae</taxon>
        <taxon>Saccharomyces</taxon>
    </lineage>
</organism>
<sequence length="106" mass="12388">MSKLGPLARSVKWTLSVGVIGSVFYLYRYSNNGYFYDHDATWLKQDHQVQDLVDRKEVVPGETRNRKLVVTDDGTAWSRTMGESIKDIWNEQIRNSVDWIYSWGKN</sequence>
<name>MIC12_YEAS8</name>
<comment type="function">
    <text evidence="1">Component of the MICOS complex, a large protein complex of the mitochondrial inner membrane that plays crucial roles in the maintenance of crista junctions, inner membrane architecture, and formation of contact sites to the outer membrane.</text>
</comment>
<comment type="subunit">
    <text evidence="1">Component of the mitochondrial contact site and cristae organizing system (MICOS) complex.</text>
</comment>
<comment type="subcellular location">
    <subcellularLocation>
        <location evidence="1">Mitochondrion inner membrane</location>
        <topology evidence="1">Single-pass membrane protein</topology>
    </subcellularLocation>
</comment>
<comment type="similarity">
    <text evidence="3">Belongs to the MICOS complex subunit Mic12 family.</text>
</comment>
<feature type="chain" id="PRO_0000399896" description="MICOS complex subunit MIC12">
    <location>
        <begin position="1"/>
        <end position="106"/>
    </location>
</feature>
<feature type="transmembrane region" description="Helical" evidence="2">
    <location>
        <begin position="11"/>
        <end position="27"/>
    </location>
</feature>
<protein>
    <recommendedName>
        <fullName>MICOS complex subunit MIC12</fullName>
    </recommendedName>
    <alternativeName>
        <fullName>Altered inheritance of mitochondria protein 5, mitochondrial</fullName>
    </alternativeName>
    <alternativeName>
        <fullName>Found in mitochondrial proteome protein 51</fullName>
    </alternativeName>
</protein>
<proteinExistence type="inferred from homology"/>
<accession>D3UF10</accession>
<keyword id="KW-0472">Membrane</keyword>
<keyword id="KW-0496">Mitochondrion</keyword>
<keyword id="KW-0999">Mitochondrion inner membrane</keyword>
<keyword id="KW-0812">Transmembrane</keyword>
<keyword id="KW-1133">Transmembrane helix</keyword>
<dbReference type="EMBL" id="FN393060">
    <property type="protein sequence ID" value="CBK39340.1"/>
    <property type="molecule type" value="Genomic_DNA"/>
</dbReference>
<dbReference type="SMR" id="D3UF10"/>
<dbReference type="HOGENOM" id="CLU_164154_0_0_1"/>
<dbReference type="OrthoDB" id="9381at4893"/>
<dbReference type="Proteomes" id="UP000000286">
    <property type="component" value="Chromosome II, Scaffold EC1118_1B15"/>
</dbReference>
<dbReference type="GO" id="GO:0061617">
    <property type="term" value="C:MICOS complex"/>
    <property type="evidence" value="ECO:0007669"/>
    <property type="project" value="InterPro"/>
</dbReference>
<dbReference type="GO" id="GO:0044284">
    <property type="term" value="C:mitochondrial crista junction"/>
    <property type="evidence" value="ECO:0007669"/>
    <property type="project" value="InterPro"/>
</dbReference>
<dbReference type="GO" id="GO:0042407">
    <property type="term" value="P:cristae formation"/>
    <property type="evidence" value="ECO:0007669"/>
    <property type="project" value="InterPro"/>
</dbReference>
<dbReference type="InterPro" id="IPR031463">
    <property type="entry name" value="Mic12"/>
</dbReference>
<dbReference type="Pfam" id="PF17050">
    <property type="entry name" value="AIM5"/>
    <property type="match status" value="1"/>
</dbReference>
<gene>
    <name type="primary">AIM5</name>
    <name type="synonym">FMP51</name>
    <name type="ORF">EC1118_1B15_4445g</name>
</gene>
<reference key="1">
    <citation type="journal article" date="2009" name="Proc. Natl. Acad. Sci. U.S.A.">
        <title>Eukaryote-to-eukaryote gene transfer events revealed by the genome sequence of the wine yeast Saccharomyces cerevisiae EC1118.</title>
        <authorList>
            <person name="Novo M."/>
            <person name="Bigey F."/>
            <person name="Beyne E."/>
            <person name="Galeote V."/>
            <person name="Gavory F."/>
            <person name="Mallet S."/>
            <person name="Cambon B."/>
            <person name="Legras J.-L."/>
            <person name="Wincker P."/>
            <person name="Casaregola S."/>
            <person name="Dequin S."/>
        </authorList>
    </citation>
    <scope>NUCLEOTIDE SEQUENCE [LARGE SCALE GENOMIC DNA]</scope>
    <source>
        <strain>Lalvin EC1118 / Prise de mousse</strain>
    </source>
</reference>